<reference key="1">
    <citation type="submission" date="2006-08" db="EMBL/GenBank/DDBJ databases">
        <title>Complete sequence of Alkalilimnicola ehrilichei MLHE-1.</title>
        <authorList>
            <person name="Copeland A."/>
            <person name="Lucas S."/>
            <person name="Lapidus A."/>
            <person name="Barry K."/>
            <person name="Detter J.C."/>
            <person name="Glavina del Rio T."/>
            <person name="Hammon N."/>
            <person name="Israni S."/>
            <person name="Dalin E."/>
            <person name="Tice H."/>
            <person name="Pitluck S."/>
            <person name="Sims D."/>
            <person name="Brettin T."/>
            <person name="Bruce D."/>
            <person name="Han C."/>
            <person name="Tapia R."/>
            <person name="Gilna P."/>
            <person name="Schmutz J."/>
            <person name="Larimer F."/>
            <person name="Land M."/>
            <person name="Hauser L."/>
            <person name="Kyrpides N."/>
            <person name="Mikhailova N."/>
            <person name="Oremland R.S."/>
            <person name="Hoeft S.E."/>
            <person name="Switzer-Blum J."/>
            <person name="Kulp T."/>
            <person name="King G."/>
            <person name="Tabita R."/>
            <person name="Witte B."/>
            <person name="Santini J.M."/>
            <person name="Basu P."/>
            <person name="Hollibaugh J.T."/>
            <person name="Xie G."/>
            <person name="Stolz J.F."/>
            <person name="Richardson P."/>
        </authorList>
    </citation>
    <scope>NUCLEOTIDE SEQUENCE [LARGE SCALE GENOMIC DNA]</scope>
    <source>
        <strain>ATCC BAA-1101 / DSM 17681 / MLHE-1</strain>
    </source>
</reference>
<name>MINE_ALKEH</name>
<keyword id="KW-0131">Cell cycle</keyword>
<keyword id="KW-0132">Cell division</keyword>
<keyword id="KW-1185">Reference proteome</keyword>
<protein>
    <recommendedName>
        <fullName evidence="1">Cell division topological specificity factor</fullName>
    </recommendedName>
</protein>
<organism>
    <name type="scientific">Alkalilimnicola ehrlichii (strain ATCC BAA-1101 / DSM 17681 / MLHE-1)</name>
    <dbReference type="NCBI Taxonomy" id="187272"/>
    <lineage>
        <taxon>Bacteria</taxon>
        <taxon>Pseudomonadati</taxon>
        <taxon>Pseudomonadota</taxon>
        <taxon>Gammaproteobacteria</taxon>
        <taxon>Chromatiales</taxon>
        <taxon>Ectothiorhodospiraceae</taxon>
        <taxon>Alkalilimnicola</taxon>
    </lineage>
</organism>
<feature type="chain" id="PRO_0000298068" description="Cell division topological specificity factor">
    <location>
        <begin position="1"/>
        <end position="94"/>
    </location>
</feature>
<comment type="function">
    <text evidence="1">Prevents the cell division inhibition by proteins MinC and MinD at internal division sites while permitting inhibition at polar sites. This ensures cell division at the proper site by restricting the formation of a division septum at the midpoint of the long axis of the cell.</text>
</comment>
<comment type="similarity">
    <text evidence="1">Belongs to the MinE family.</text>
</comment>
<evidence type="ECO:0000255" key="1">
    <source>
        <dbReference type="HAMAP-Rule" id="MF_00262"/>
    </source>
</evidence>
<accession>Q0A749</accession>
<dbReference type="EMBL" id="CP000453">
    <property type="protein sequence ID" value="ABI57338.1"/>
    <property type="molecule type" value="Genomic_DNA"/>
</dbReference>
<dbReference type="RefSeq" id="WP_011629732.1">
    <property type="nucleotide sequence ID" value="NC_008340.1"/>
</dbReference>
<dbReference type="SMR" id="Q0A749"/>
<dbReference type="KEGG" id="aeh:Mlg_1996"/>
<dbReference type="eggNOG" id="COG0851">
    <property type="taxonomic scope" value="Bacteria"/>
</dbReference>
<dbReference type="HOGENOM" id="CLU_137929_2_2_6"/>
<dbReference type="OrthoDB" id="9802655at2"/>
<dbReference type="Proteomes" id="UP000001962">
    <property type="component" value="Chromosome"/>
</dbReference>
<dbReference type="GO" id="GO:0051301">
    <property type="term" value="P:cell division"/>
    <property type="evidence" value="ECO:0007669"/>
    <property type="project" value="UniProtKB-KW"/>
</dbReference>
<dbReference type="GO" id="GO:0032955">
    <property type="term" value="P:regulation of division septum assembly"/>
    <property type="evidence" value="ECO:0007669"/>
    <property type="project" value="InterPro"/>
</dbReference>
<dbReference type="FunFam" id="3.30.1070.10:FF:000001">
    <property type="entry name" value="Cell division topological specificity factor"/>
    <property type="match status" value="1"/>
</dbReference>
<dbReference type="Gene3D" id="3.30.1070.10">
    <property type="entry name" value="Cell division topological specificity factor MinE"/>
    <property type="match status" value="1"/>
</dbReference>
<dbReference type="HAMAP" id="MF_00262">
    <property type="entry name" value="MinE"/>
    <property type="match status" value="1"/>
</dbReference>
<dbReference type="InterPro" id="IPR005527">
    <property type="entry name" value="MinE"/>
</dbReference>
<dbReference type="InterPro" id="IPR036707">
    <property type="entry name" value="MinE_sf"/>
</dbReference>
<dbReference type="NCBIfam" id="TIGR01215">
    <property type="entry name" value="minE"/>
    <property type="match status" value="1"/>
</dbReference>
<dbReference type="NCBIfam" id="NF001422">
    <property type="entry name" value="PRK00296.1"/>
    <property type="match status" value="1"/>
</dbReference>
<dbReference type="NCBIfam" id="NF010595">
    <property type="entry name" value="PRK13989.1"/>
    <property type="match status" value="1"/>
</dbReference>
<dbReference type="Pfam" id="PF03776">
    <property type="entry name" value="MinE"/>
    <property type="match status" value="1"/>
</dbReference>
<dbReference type="SUPFAM" id="SSF55229">
    <property type="entry name" value="Cell division protein MinE topological specificity domain"/>
    <property type="match status" value="1"/>
</dbReference>
<sequence>MGFLSYFRSQKKRSASVAKERLQIIVARERSQTATGPDYLPMLKEELLDVIRKYVQVDRDAVNFQLDREGDCEVLELNITLPDQQDQAAAHDRG</sequence>
<proteinExistence type="inferred from homology"/>
<gene>
    <name evidence="1" type="primary">minE</name>
    <name type="ordered locus">Mlg_1996</name>
</gene>